<feature type="chain" id="PRO_0000170500" description="Guanylate kinase">
    <location>
        <begin position="1"/>
        <end position="222"/>
    </location>
</feature>
<feature type="domain" description="Guanylate kinase-like" evidence="1">
    <location>
        <begin position="19"/>
        <end position="197"/>
    </location>
</feature>
<feature type="binding site" evidence="1">
    <location>
        <begin position="26"/>
        <end position="33"/>
    </location>
    <ligand>
        <name>ATP</name>
        <dbReference type="ChEBI" id="CHEBI:30616"/>
    </ligand>
</feature>
<feature type="strand" evidence="2">
    <location>
        <begin position="21"/>
        <end position="25"/>
    </location>
</feature>
<feature type="helix" evidence="2">
    <location>
        <begin position="32"/>
        <end position="39"/>
    </location>
</feature>
<feature type="turn" evidence="2">
    <location>
        <begin position="40"/>
        <end position="42"/>
    </location>
</feature>
<feature type="strand" evidence="2">
    <location>
        <begin position="43"/>
        <end position="47"/>
    </location>
</feature>
<feature type="strand" evidence="2">
    <location>
        <begin position="50"/>
        <end position="52"/>
    </location>
</feature>
<feature type="turn" evidence="2">
    <location>
        <begin position="62"/>
        <end position="64"/>
    </location>
</feature>
<feature type="strand" evidence="2">
    <location>
        <begin position="65"/>
        <end position="68"/>
    </location>
</feature>
<feature type="helix" evidence="2">
    <location>
        <begin position="71"/>
        <end position="79"/>
    </location>
</feature>
<feature type="strand" evidence="2">
    <location>
        <begin position="83"/>
        <end position="89"/>
    </location>
</feature>
<feature type="strand" evidence="2">
    <location>
        <begin position="92"/>
        <end position="97"/>
    </location>
</feature>
<feature type="helix" evidence="2">
    <location>
        <begin position="98"/>
        <end position="106"/>
    </location>
</feature>
<feature type="strand" evidence="2">
    <location>
        <begin position="110"/>
        <end position="114"/>
    </location>
</feature>
<feature type="helix" evidence="2">
    <location>
        <begin position="117"/>
        <end position="126"/>
    </location>
</feature>
<feature type="strand" evidence="2">
    <location>
        <begin position="130"/>
        <end position="137"/>
    </location>
</feature>
<feature type="helix" evidence="2">
    <location>
        <begin position="141"/>
        <end position="151"/>
    </location>
</feature>
<feature type="helix" evidence="2">
    <location>
        <begin position="156"/>
        <end position="170"/>
    </location>
</feature>
<feature type="helix" evidence="2">
    <location>
        <begin position="171"/>
        <end position="175"/>
    </location>
</feature>
<feature type="strand" evidence="2">
    <location>
        <begin position="177"/>
        <end position="181"/>
    </location>
</feature>
<feature type="helix" evidence="2">
    <location>
        <begin position="185"/>
        <end position="200"/>
    </location>
</feature>
<feature type="helix" evidence="2">
    <location>
        <begin position="203"/>
        <end position="205"/>
    </location>
</feature>
<feature type="helix" evidence="2">
    <location>
        <begin position="209"/>
        <end position="218"/>
    </location>
</feature>
<comment type="function">
    <text evidence="1">Essential for recycling GMP and indirectly, cGMP.</text>
</comment>
<comment type="catalytic activity">
    <reaction evidence="1">
        <text>GMP + ATP = GDP + ADP</text>
        <dbReference type="Rhea" id="RHEA:20780"/>
        <dbReference type="ChEBI" id="CHEBI:30616"/>
        <dbReference type="ChEBI" id="CHEBI:58115"/>
        <dbReference type="ChEBI" id="CHEBI:58189"/>
        <dbReference type="ChEBI" id="CHEBI:456216"/>
        <dbReference type="EC" id="2.7.4.8"/>
    </reaction>
</comment>
<comment type="subcellular location">
    <subcellularLocation>
        <location evidence="1">Cytoplasm</location>
    </subcellularLocation>
</comment>
<comment type="similarity">
    <text evidence="1">Belongs to the guanylate kinase family.</text>
</comment>
<dbReference type="EC" id="2.7.4.8" evidence="1"/>
<dbReference type="EMBL" id="BX897699">
    <property type="protein sequence ID" value="CAF27347.1"/>
    <property type="molecule type" value="Genomic_DNA"/>
</dbReference>
<dbReference type="PDB" id="7LUY">
    <property type="method" value="X-ray"/>
    <property type="resolution" value="2.30 A"/>
    <property type="chains" value="A/B/C/D/E/F=1-222"/>
</dbReference>
<dbReference type="PDBsum" id="7LUY"/>
<dbReference type="SMR" id="Q6G439"/>
<dbReference type="PaxDb" id="283166-BH05390"/>
<dbReference type="EnsemblBacteria" id="CAF27347">
    <property type="protein sequence ID" value="CAF27347"/>
    <property type="gene ID" value="BH05390"/>
</dbReference>
<dbReference type="KEGG" id="bhe:BH05390"/>
<dbReference type="eggNOG" id="COG0194">
    <property type="taxonomic scope" value="Bacteria"/>
</dbReference>
<dbReference type="OrthoDB" id="9808150at2"/>
<dbReference type="Proteomes" id="UP000000421">
    <property type="component" value="Chromosome"/>
</dbReference>
<dbReference type="GO" id="GO:0005829">
    <property type="term" value="C:cytosol"/>
    <property type="evidence" value="ECO:0007669"/>
    <property type="project" value="TreeGrafter"/>
</dbReference>
<dbReference type="GO" id="GO:0005524">
    <property type="term" value="F:ATP binding"/>
    <property type="evidence" value="ECO:0007669"/>
    <property type="project" value="UniProtKB-UniRule"/>
</dbReference>
<dbReference type="GO" id="GO:0004385">
    <property type="term" value="F:guanylate kinase activity"/>
    <property type="evidence" value="ECO:0007669"/>
    <property type="project" value="UniProtKB-UniRule"/>
</dbReference>
<dbReference type="CDD" id="cd00071">
    <property type="entry name" value="GMPK"/>
    <property type="match status" value="1"/>
</dbReference>
<dbReference type="FunFam" id="3.30.63.10:FF:000002">
    <property type="entry name" value="Guanylate kinase 1"/>
    <property type="match status" value="1"/>
</dbReference>
<dbReference type="Gene3D" id="3.30.63.10">
    <property type="entry name" value="Guanylate Kinase phosphate binding domain"/>
    <property type="match status" value="1"/>
</dbReference>
<dbReference type="Gene3D" id="3.40.50.300">
    <property type="entry name" value="P-loop containing nucleotide triphosphate hydrolases"/>
    <property type="match status" value="1"/>
</dbReference>
<dbReference type="HAMAP" id="MF_00328">
    <property type="entry name" value="Guanylate_kinase"/>
    <property type="match status" value="1"/>
</dbReference>
<dbReference type="InterPro" id="IPR008145">
    <property type="entry name" value="GK/Ca_channel_bsu"/>
</dbReference>
<dbReference type="InterPro" id="IPR008144">
    <property type="entry name" value="Guanylate_kin-like_dom"/>
</dbReference>
<dbReference type="InterPro" id="IPR017665">
    <property type="entry name" value="Guanylate_kinase"/>
</dbReference>
<dbReference type="InterPro" id="IPR020590">
    <property type="entry name" value="Guanylate_kinase_CS"/>
</dbReference>
<dbReference type="InterPro" id="IPR027417">
    <property type="entry name" value="P-loop_NTPase"/>
</dbReference>
<dbReference type="NCBIfam" id="TIGR03263">
    <property type="entry name" value="guanyl_kin"/>
    <property type="match status" value="1"/>
</dbReference>
<dbReference type="PANTHER" id="PTHR23117:SF13">
    <property type="entry name" value="GUANYLATE KINASE"/>
    <property type="match status" value="1"/>
</dbReference>
<dbReference type="PANTHER" id="PTHR23117">
    <property type="entry name" value="GUANYLATE KINASE-RELATED"/>
    <property type="match status" value="1"/>
</dbReference>
<dbReference type="Pfam" id="PF00625">
    <property type="entry name" value="Guanylate_kin"/>
    <property type="match status" value="1"/>
</dbReference>
<dbReference type="SMART" id="SM00072">
    <property type="entry name" value="GuKc"/>
    <property type="match status" value="1"/>
</dbReference>
<dbReference type="SUPFAM" id="SSF52540">
    <property type="entry name" value="P-loop containing nucleoside triphosphate hydrolases"/>
    <property type="match status" value="1"/>
</dbReference>
<dbReference type="PROSITE" id="PS00856">
    <property type="entry name" value="GUANYLATE_KINASE_1"/>
    <property type="match status" value="1"/>
</dbReference>
<dbReference type="PROSITE" id="PS50052">
    <property type="entry name" value="GUANYLATE_KINASE_2"/>
    <property type="match status" value="1"/>
</dbReference>
<reference key="1">
    <citation type="journal article" date="2004" name="Proc. Natl. Acad. Sci. U.S.A.">
        <title>The louse-borne human pathogen Bartonella quintana is a genomic derivative of the zoonotic agent Bartonella henselae.</title>
        <authorList>
            <person name="Alsmark U.C.M."/>
            <person name="Frank A.C."/>
            <person name="Karlberg E.O."/>
            <person name="Legault B.-A."/>
            <person name="Ardell D.H."/>
            <person name="Canbaeck B."/>
            <person name="Eriksson A.-S."/>
            <person name="Naeslund A.K."/>
            <person name="Handley S.A."/>
            <person name="Huvet M."/>
            <person name="La Scola B."/>
            <person name="Holmberg M."/>
            <person name="Andersson S.G.E."/>
        </authorList>
    </citation>
    <scope>NUCLEOTIDE SEQUENCE [LARGE SCALE GENOMIC DNA]</scope>
    <source>
        <strain>ATCC 49882 / DSM 28221 / CCUG 30454 / Houston 1</strain>
    </source>
</reference>
<evidence type="ECO:0000255" key="1">
    <source>
        <dbReference type="HAMAP-Rule" id="MF_00328"/>
    </source>
</evidence>
<evidence type="ECO:0007829" key="2">
    <source>
        <dbReference type="PDB" id="7LUY"/>
    </source>
</evidence>
<keyword id="KW-0002">3D-structure</keyword>
<keyword id="KW-0067">ATP-binding</keyword>
<keyword id="KW-0963">Cytoplasm</keyword>
<keyword id="KW-0418">Kinase</keyword>
<keyword id="KW-0547">Nucleotide-binding</keyword>
<keyword id="KW-0808">Transferase</keyword>
<accession>Q6G439</accession>
<proteinExistence type="evidence at protein level"/>
<gene>
    <name evidence="1" type="primary">gmk</name>
    <name type="ordered locus">BH05390</name>
</gene>
<name>KGUA_BARHE</name>
<protein>
    <recommendedName>
        <fullName evidence="1">Guanylate kinase</fullName>
        <ecNumber evidence="1">2.7.4.8</ecNumber>
    </recommendedName>
    <alternativeName>
        <fullName evidence="1">GMP kinase</fullName>
    </alternativeName>
</protein>
<sequence>MVTFFENELSAKKRNQRRGFLFILSSPSGAGKSTLSRLLLKDGKLELSISMTTRQKRPSEVDGLHYHFISKKEFKRKRDGNEFIEWAEVHGNYYGTLRESVENVLSTGRDMLFDIDYQGTKQLQKKMPGDTVSVFILPPSMKELISRLYRRAEDSQDIINLRLKNARTEMQHWRSYDYVIINENLNQSVSLIKSIYLAETVKRERCFFLEPFINGLIAEKID</sequence>
<organism>
    <name type="scientific">Bartonella henselae (strain ATCC 49882 / DSM 28221 / CCUG 30454 / Houston 1)</name>
    <name type="common">Rochalimaea henselae</name>
    <dbReference type="NCBI Taxonomy" id="283166"/>
    <lineage>
        <taxon>Bacteria</taxon>
        <taxon>Pseudomonadati</taxon>
        <taxon>Pseudomonadota</taxon>
        <taxon>Alphaproteobacteria</taxon>
        <taxon>Hyphomicrobiales</taxon>
        <taxon>Bartonellaceae</taxon>
        <taxon>Bartonella</taxon>
    </lineage>
</organism>